<evidence type="ECO:0000250" key="1"/>
<evidence type="ECO:0000269" key="2">
    <source>
    </source>
</evidence>
<evidence type="ECO:0000305" key="3"/>
<organism>
    <name type="scientific">Streptococcus pyogenes serotype M1</name>
    <dbReference type="NCBI Taxonomy" id="301447"/>
    <lineage>
        <taxon>Bacteria</taxon>
        <taxon>Bacillati</taxon>
        <taxon>Bacillota</taxon>
        <taxon>Bacilli</taxon>
        <taxon>Lactobacillales</taxon>
        <taxon>Streptococcaceae</taxon>
        <taxon>Streptococcus</taxon>
    </lineage>
</organism>
<gene>
    <name type="primary">ugl</name>
    <name type="ordered locus">SPy_0632</name>
    <name type="ordered locus">M5005_Spy0522</name>
</gene>
<proteinExistence type="evidence at protein level"/>
<feature type="chain" id="PRO_0000422018" description="Unsaturated chondroitin disaccharide hydrolase">
    <location>
        <begin position="1"/>
        <end position="399"/>
    </location>
</feature>
<feature type="active site" description="Nucleophile" evidence="1">
    <location>
        <position position="116"/>
    </location>
</feature>
<feature type="active site" description="Proton donor" evidence="1">
    <location>
        <position position="176"/>
    </location>
</feature>
<feature type="binding site" evidence="1">
    <location>
        <position position="116"/>
    </location>
    <ligand>
        <name>substrate</name>
    </ligand>
</feature>
<feature type="binding site" evidence="1">
    <location>
        <position position="176"/>
    </location>
    <ligand>
        <name>substrate</name>
    </ligand>
</feature>
<feature type="binding site" evidence="1">
    <location>
        <position position="234"/>
    </location>
    <ligand>
        <name>substrate</name>
    </ligand>
</feature>
<feature type="binding site" evidence="1">
    <location>
        <position position="236"/>
    </location>
    <ligand>
        <name>substrate</name>
    </ligand>
</feature>
<feature type="binding site" evidence="1">
    <location>
        <position position="248"/>
    </location>
    <ligand>
        <name>substrate</name>
    </ligand>
</feature>
<feature type="binding site" evidence="1">
    <location>
        <position position="252"/>
    </location>
    <ligand>
        <name>substrate</name>
    </ligand>
</feature>
<feature type="binding site" evidence="1">
    <location>
        <position position="366"/>
    </location>
    <ligand>
        <name>substrate</name>
    </ligand>
</feature>
<feature type="binding site" evidence="1">
    <location>
        <position position="369"/>
    </location>
    <ligand>
        <name>substrate</name>
    </ligand>
</feature>
<protein>
    <recommendedName>
        <fullName>Unsaturated chondroitin disaccharide hydrolase</fullName>
        <ecNumber>3.2.1.180</ecNumber>
    </recommendedName>
    <alternativeName>
        <fullName>Unsaturated glucuronyl hydrolase</fullName>
        <shortName>SpyUGL</shortName>
    </alternativeName>
</protein>
<comment type="function">
    <text evidence="2">Catalyzes the hydrolysis of unsaturated hyaluronate and chondroitin disaccharides. Also degrades unsaturated heparin disaccharides. Releases 4-deoxy-4,5-didehydro D-glucuronic acid or 4-deoxy-4,5-didehydro L-iduronic acid from chondroitin disaccharides, hyaluronan disaccharides and heparin disaccharides and cleaves both glycosidic (1-&gt;3) and (1-&gt;4) bonds. Prefers sulfated glycosaminoglycans compared to unsulfated glycosaminoglycans. Probably required for mammalian cells invasion through the degradation of extracellular sulfated glycosaminoglycans such as chondroitin and hyaluronan.</text>
</comment>
<comment type="catalytic activity">
    <reaction evidence="2">
        <text>beta-D-4-deoxy-Delta(4)-GlcpA-(1-&gt;3)-beta-D-GalpNAc6S + H2O = N-acetyl-beta-D-galactosamine 6-sulfate + 5-dehydro-4-deoxy-D-glucuronate</text>
        <dbReference type="Rhea" id="RHEA:31647"/>
        <dbReference type="ChEBI" id="CHEBI:15377"/>
        <dbReference type="ChEBI" id="CHEBI:17117"/>
        <dbReference type="ChEBI" id="CHEBI:63267"/>
        <dbReference type="ChEBI" id="CHEBI:63270"/>
        <dbReference type="EC" id="3.2.1.180"/>
    </reaction>
</comment>
<comment type="biophysicochemical properties">
    <kinetics>
        <KM evidence="2">0.39 mM for unsaturated chondroitin disaccharide sulfated at C-6 position of GalNAc residue</KM>
        <text>kcat is 4 sec(-1) with unsaturated chondroitin disaccharide sulfated at C-6 position of GalNAc residue.</text>
    </kinetics>
    <phDependence>
        <text evidence="2">Optimum pH is 5.5.</text>
    </phDependence>
    <temperatureDependence>
        <text evidence="2">Optimum temperature is 37 degrees Celsius.</text>
    </temperatureDependence>
</comment>
<comment type="subunit">
    <text evidence="2">Monomer.</text>
</comment>
<comment type="similarity">
    <text evidence="3">Belongs to the glycosyl hydrolase 88 family.</text>
</comment>
<name>UCDH_STRP1</name>
<dbReference type="EC" id="3.2.1.180"/>
<dbReference type="EMBL" id="AE004092">
    <property type="protein sequence ID" value="AAK33600.1"/>
    <property type="molecule type" value="Genomic_DNA"/>
</dbReference>
<dbReference type="EMBL" id="CP000017">
    <property type="protein sequence ID" value="AAZ51140.1"/>
    <property type="molecule type" value="Genomic_DNA"/>
</dbReference>
<dbReference type="RefSeq" id="NP_268879.1">
    <property type="nucleotide sequence ID" value="NC_002737.2"/>
</dbReference>
<dbReference type="SMR" id="Q9A0T3"/>
<dbReference type="CAZy" id="GH88">
    <property type="family name" value="Glycoside Hydrolase Family 88"/>
</dbReference>
<dbReference type="PaxDb" id="1314-HKU360_00533"/>
<dbReference type="KEGG" id="spy:SPy_0632"/>
<dbReference type="KEGG" id="spz:M5005_Spy0522"/>
<dbReference type="PATRIC" id="fig|160490.10.peg.537"/>
<dbReference type="HOGENOM" id="CLU_027158_1_1_9"/>
<dbReference type="OMA" id="WLAYEYT"/>
<dbReference type="BRENDA" id="3.2.1.180">
    <property type="organism ID" value="5935"/>
</dbReference>
<dbReference type="Proteomes" id="UP000000750">
    <property type="component" value="Chromosome"/>
</dbReference>
<dbReference type="GO" id="GO:0052757">
    <property type="term" value="F:chondroitin hydrolase activity"/>
    <property type="evidence" value="ECO:0000314"/>
    <property type="project" value="UniProtKB"/>
</dbReference>
<dbReference type="GO" id="GO:0102212">
    <property type="term" value="F:unsaturated chondroitin disaccharide hydrolase activity"/>
    <property type="evidence" value="ECO:0007669"/>
    <property type="project" value="UniProtKB-EC"/>
</dbReference>
<dbReference type="GO" id="GO:0000272">
    <property type="term" value="P:polysaccharide catabolic process"/>
    <property type="evidence" value="ECO:0000314"/>
    <property type="project" value="UniProtKB"/>
</dbReference>
<dbReference type="Gene3D" id="1.50.10.10">
    <property type="match status" value="1"/>
</dbReference>
<dbReference type="InterPro" id="IPR008928">
    <property type="entry name" value="6-hairpin_glycosidase_sf"/>
</dbReference>
<dbReference type="InterPro" id="IPR012341">
    <property type="entry name" value="6hp_glycosidase-like_sf"/>
</dbReference>
<dbReference type="InterPro" id="IPR010905">
    <property type="entry name" value="Glyco_hydro_88"/>
</dbReference>
<dbReference type="InterPro" id="IPR052369">
    <property type="entry name" value="UG_Glycosaminoglycan_Hydrolase"/>
</dbReference>
<dbReference type="PANTHER" id="PTHR36845">
    <property type="entry name" value="HYDROLASE, PUTATIVE (AFU_ORTHOLOGUE AFUA_7G05090)-RELATED"/>
    <property type="match status" value="1"/>
</dbReference>
<dbReference type="PANTHER" id="PTHR36845:SF1">
    <property type="entry name" value="HYDROLASE, PUTATIVE (AFU_ORTHOLOGUE AFUA_7G05090)-RELATED"/>
    <property type="match status" value="1"/>
</dbReference>
<dbReference type="Pfam" id="PF07470">
    <property type="entry name" value="Glyco_hydro_88"/>
    <property type="match status" value="1"/>
</dbReference>
<dbReference type="SUPFAM" id="SSF48208">
    <property type="entry name" value="Six-hairpin glycosidases"/>
    <property type="match status" value="1"/>
</dbReference>
<keyword id="KW-0326">Glycosidase</keyword>
<keyword id="KW-0378">Hydrolase</keyword>
<keyword id="KW-1185">Reference proteome</keyword>
<reference key="1">
    <citation type="journal article" date="2001" name="Proc. Natl. Acad. Sci. U.S.A.">
        <title>Complete genome sequence of an M1 strain of Streptococcus pyogenes.</title>
        <authorList>
            <person name="Ferretti J.J."/>
            <person name="McShan W.M."/>
            <person name="Ajdic D.J."/>
            <person name="Savic D.J."/>
            <person name="Savic G."/>
            <person name="Lyon K."/>
            <person name="Primeaux C."/>
            <person name="Sezate S."/>
            <person name="Suvorov A.N."/>
            <person name="Kenton S."/>
            <person name="Lai H.S."/>
            <person name="Lin S.P."/>
            <person name="Qian Y."/>
            <person name="Jia H.G."/>
            <person name="Najar F.Z."/>
            <person name="Ren Q."/>
            <person name="Zhu H."/>
            <person name="Song L."/>
            <person name="White J."/>
            <person name="Yuan X."/>
            <person name="Clifton S.W."/>
            <person name="Roe B.A."/>
            <person name="McLaughlin R.E."/>
        </authorList>
    </citation>
    <scope>NUCLEOTIDE SEQUENCE [LARGE SCALE GENOMIC DNA]</scope>
    <source>
        <strain>ATCC 700294 / SF370 / Serotype M1</strain>
    </source>
</reference>
<reference key="2">
    <citation type="journal article" date="2005" name="J. Infect. Dis.">
        <title>Evolutionary origin and emergence of a highly successful clone of serotype M1 group A Streptococcus involved multiple horizontal gene transfer events.</title>
        <authorList>
            <person name="Sumby P."/>
            <person name="Porcella S.F."/>
            <person name="Madrigal A.G."/>
            <person name="Barbian K.D."/>
            <person name="Virtaneva K."/>
            <person name="Ricklefs S.M."/>
            <person name="Sturdevant D.E."/>
            <person name="Graham M.R."/>
            <person name="Vuopio-Varkila J."/>
            <person name="Hoe N.P."/>
            <person name="Musser J.M."/>
        </authorList>
    </citation>
    <scope>NUCLEOTIDE SEQUENCE [LARGE SCALE GENOMIC DNA]</scope>
    <source>
        <strain>ATCC BAA-947 / MGAS5005 / Serotype M1</strain>
    </source>
</reference>
<reference key="3">
    <citation type="journal article" date="2009" name="J. Biol. Chem.">
        <title>Substrate specificity of streptococcal unsaturated glucuronyl hydrolases for sulfated glycosaminoglycan.</title>
        <authorList>
            <person name="Maruyama Y."/>
            <person name="Nakamichi Y."/>
            <person name="Itoh T."/>
            <person name="Mikami B."/>
            <person name="Hashimoto W."/>
            <person name="Murata K."/>
        </authorList>
    </citation>
    <scope>FUNCTION</scope>
    <scope>CATALYTIC ACTIVITY</scope>
    <scope>SUBUNIT</scope>
    <scope>BIOPHYSICOCHEMICAL PROPERTIES</scope>
    <source>
        <strain>ATCC BAA-947 / MGAS5005 / Serotype M1</strain>
    </source>
</reference>
<sequence>MARPLKTIALEPIKQPERFTKEDFLSQEDITQALDLALKQVRLNMDYFKEDFPTPATKDNQYAIMDNTEWTNAFWTGCLWLAYEYSGDDAIKALAQANDLSFLDRVTRDIELDHHDLGFLYTPSCMAEWKLLKTPESREAALKAADKLVQRYQDKGGFIQAWGELGKKEDYRLIIDCLLNIQLLFFASQETGDNRYRDMAINHFYASANHVIRDDASAYHTFYFDPETGDPVKGVTRQGYSDDSAWARGQAWGIYGIPLTYRFLKEPELIQLFKGMTHYFLNRLPKDQVSYWDLIFGDGSEQSRDSSATAIAVCGIHEMLKTLPDHDPDKKTYEAAMHSMLRALIKDYANKDLKPGAPLLLHGVYSWHSGKGVDEGNIWGDYYYLEALLRFYKDWNPYW</sequence>
<accession>Q9A0T3</accession>
<accession>Q48ZS8</accession>